<reference key="1">
    <citation type="journal article" date="2003" name="Drug Resist. Updat.">
        <title>Insights on antibiotic resistance of Staphylococcus aureus from its whole genome: genomic island SCC.</title>
        <authorList>
            <person name="Ito T."/>
            <person name="Okuma K."/>
            <person name="Ma X.X."/>
            <person name="Yuzawa H."/>
            <person name="Hiramatsu K."/>
        </authorList>
    </citation>
    <scope>NUCLEOTIDE SEQUENCE [GENOMIC DNA]</scope>
    <source>
        <strain>MR108</strain>
    </source>
</reference>
<evidence type="ECO:0000255" key="1"/>
<proteinExistence type="predicted"/>
<keyword id="KW-0175">Coiled coil</keyword>
<feature type="chain" id="PRO_0000224930" description="Uncharacterized chromosomal cassette SCCmec type IVc protein CR006">
    <location>
        <begin position="1"/>
        <end position="706"/>
    </location>
</feature>
<feature type="coiled-coil region" evidence="1">
    <location>
        <begin position="86"/>
        <end position="162"/>
    </location>
</feature>
<feature type="coiled-coil region" evidence="1">
    <location>
        <begin position="269"/>
        <end position="299"/>
    </location>
</feature>
<feature type="coiled-coil region" evidence="1">
    <location>
        <begin position="337"/>
        <end position="427"/>
    </location>
</feature>
<name>YM4C6_STAAU</name>
<organism>
    <name type="scientific">Staphylococcus aureus</name>
    <dbReference type="NCBI Taxonomy" id="1280"/>
    <lineage>
        <taxon>Bacteria</taxon>
        <taxon>Bacillati</taxon>
        <taxon>Bacillota</taxon>
        <taxon>Bacilli</taxon>
        <taxon>Bacillales</taxon>
        <taxon>Staphylococcaceae</taxon>
        <taxon>Staphylococcus</taxon>
    </lineage>
</organism>
<sequence length="706" mass="83549">MLELITDFSKKSFKNYSMKEELKFNAINIIYGVNGRGKTSLARGIKEIIEENNPDSLRYFYTDYIHELLLLEDSNKFKGVKATFGTKNVEIENKIIKLKNEVVDMTDTKKLLVEKRRKLRELINEIHKSRKGNLKIPLKSSNKSIEEVIAIYEKNLKDAKKIEHNIESIRNFVANDETLYNKYNSIYEVMIPSLKIETYDVDRLTKILQNNYTDIKIPSFEVIDWLRNGLELHNVEESICKFCGNNLNYNLIKEKIEIYLLNEKKKDFDYLKDVEKSIEQLSDNYEQYLSNIDIFVNELGVQKSVEESLGDSIDEIKRILKQKLGNMENDNLKFPSDDYITLISRLSEIEEECKEKKKIKLKELNKKTENINVIVTGSISLEILENQSIREELSSIQYEENECKKQEQLNEEINAKISKLHENQSDYNDFKIYLNGVFESINLHIRLKSDETTQNYYLYHDLENISLNIKDISEGEKNLIAFLFFYFELFEDEKQETIKSNIKTLIIDDPINSFDEANRFYVLELIKKVLKSKFNQIFIFTHSWNDFCDITYRLKGEDHNFYEVYKDHQGTSFLEKFKKVKTPYKKLFQEIYELSRKSQKDIVEEDCYYYHSINSIRRVFEEFLSFKLKNSDLAQKSNQPEIEEVYRKMTGNEMSNNKKIKLGSFLTIINVLSHKPYRAIDVIGSAKFLMRYIEDVDKAHYDAMKD</sequence>
<protein>
    <recommendedName>
        <fullName>Uncharacterized chromosomal cassette SCCmec type IVc protein CR006</fullName>
    </recommendedName>
</protein>
<dbReference type="EMBL" id="AB096217">
    <property type="protein sequence ID" value="BAC67554.1"/>
    <property type="molecule type" value="Genomic_DNA"/>
</dbReference>
<dbReference type="RefSeq" id="WP_000891228.1">
    <property type="nucleotide sequence ID" value="NZ_WKIW01000011.1"/>
</dbReference>
<dbReference type="Gene3D" id="3.40.50.300">
    <property type="entry name" value="P-loop containing nucleotide triphosphate hydrolases"/>
    <property type="match status" value="2"/>
</dbReference>
<dbReference type="InterPro" id="IPR026866">
    <property type="entry name" value="CR006_AAA"/>
</dbReference>
<dbReference type="InterPro" id="IPR027417">
    <property type="entry name" value="P-loop_NTPase"/>
</dbReference>
<dbReference type="Pfam" id="PF13166">
    <property type="entry name" value="AAA_13"/>
    <property type="match status" value="1"/>
</dbReference>
<dbReference type="SUPFAM" id="SSF52540">
    <property type="entry name" value="P-loop containing nucleoside triphosphate hydrolases"/>
    <property type="match status" value="1"/>
</dbReference>
<gene>
    <name type="ORF">CR006</name>
</gene>
<accession>Q84BP4</accession>